<proteinExistence type="predicted"/>
<sequence length="83" mass="9837">MKVQHKKELKFYCIVTIPSAFVVLTVISFLLQEITFPVTASAFLNASWHNLLFLIPFGLFFYPVHIWMKREFGRWNDTEKKRG</sequence>
<accession>P46332</accession>
<feature type="chain" id="PRO_0000050008" description="Uncharacterized protein YxcA">
    <location>
        <begin position="1"/>
        <end position="83"/>
    </location>
</feature>
<feature type="transmembrane region" description="Helical" evidence="1">
    <location>
        <begin position="11"/>
        <end position="31"/>
    </location>
</feature>
<feature type="transmembrane region" description="Helical" evidence="1">
    <location>
        <begin position="48"/>
        <end position="68"/>
    </location>
</feature>
<name>YXCA_BACSU</name>
<comment type="subcellular location">
    <subcellularLocation>
        <location evidence="2">Cell membrane</location>
        <topology evidence="2">Multi-pass membrane protein</topology>
    </subcellularLocation>
</comment>
<gene>
    <name type="primary">yxcA</name>
    <name type="synonym">E3C</name>
    <name type="ordered locus">BSU39830</name>
</gene>
<keyword id="KW-1003">Cell membrane</keyword>
<keyword id="KW-0472">Membrane</keyword>
<keyword id="KW-1185">Reference proteome</keyword>
<keyword id="KW-0812">Transmembrane</keyword>
<keyword id="KW-1133">Transmembrane helix</keyword>
<organism>
    <name type="scientific">Bacillus subtilis (strain 168)</name>
    <dbReference type="NCBI Taxonomy" id="224308"/>
    <lineage>
        <taxon>Bacteria</taxon>
        <taxon>Bacillati</taxon>
        <taxon>Bacillota</taxon>
        <taxon>Bacilli</taxon>
        <taxon>Bacillales</taxon>
        <taxon>Bacillaceae</taxon>
        <taxon>Bacillus</taxon>
    </lineage>
</organism>
<protein>
    <recommendedName>
        <fullName>Uncharacterized protein YxcA</fullName>
    </recommendedName>
</protein>
<evidence type="ECO:0000255" key="1"/>
<evidence type="ECO:0000305" key="2"/>
<dbReference type="EMBL" id="AB005554">
    <property type="protein sequence ID" value="BAA21602.1"/>
    <property type="molecule type" value="Genomic_DNA"/>
</dbReference>
<dbReference type="EMBL" id="AL009126">
    <property type="protein sequence ID" value="CAB16019.1"/>
    <property type="molecule type" value="Genomic_DNA"/>
</dbReference>
<dbReference type="PIR" id="C70073">
    <property type="entry name" value="C70073"/>
</dbReference>
<dbReference type="RefSeq" id="NP_391862.1">
    <property type="nucleotide sequence ID" value="NC_000964.3"/>
</dbReference>
<dbReference type="RefSeq" id="WP_003244458.1">
    <property type="nucleotide sequence ID" value="NZ_OZ025638.1"/>
</dbReference>
<dbReference type="SMR" id="P46332"/>
<dbReference type="FunCoup" id="P46332">
    <property type="interactions" value="135"/>
</dbReference>
<dbReference type="STRING" id="224308.BSU39830"/>
<dbReference type="PaxDb" id="224308-BSU39830"/>
<dbReference type="EnsemblBacteria" id="CAB16019">
    <property type="protein sequence ID" value="CAB16019"/>
    <property type="gene ID" value="BSU_39830"/>
</dbReference>
<dbReference type="GeneID" id="937641"/>
<dbReference type="KEGG" id="bsu:BSU39830"/>
<dbReference type="PATRIC" id="fig|224308.179.peg.4309"/>
<dbReference type="InParanoid" id="P46332"/>
<dbReference type="OrthoDB" id="2893138at2"/>
<dbReference type="BioCyc" id="BSUB:BSU39830-MONOMER"/>
<dbReference type="Proteomes" id="UP000001570">
    <property type="component" value="Chromosome"/>
</dbReference>
<dbReference type="GO" id="GO:0005886">
    <property type="term" value="C:plasma membrane"/>
    <property type="evidence" value="ECO:0007669"/>
    <property type="project" value="UniProtKB-SubCell"/>
</dbReference>
<reference key="1">
    <citation type="journal article" date="1995" name="DNA Res.">
        <title>Cloning and sequencing of a 36-kb region of the Bacillus subtilis genome between the gnt and iol operons.</title>
        <authorList>
            <person name="Yoshida K."/>
            <person name="Seki S."/>
            <person name="Fujimura M."/>
            <person name="Miwa Y."/>
            <person name="Fujita Y."/>
        </authorList>
    </citation>
    <scope>NUCLEOTIDE SEQUENCE [GENOMIC DNA]</scope>
    <source>
        <strain>168 / BGSC1A1</strain>
    </source>
</reference>
<reference key="2">
    <citation type="journal article" date="1997" name="Nature">
        <title>The complete genome sequence of the Gram-positive bacterium Bacillus subtilis.</title>
        <authorList>
            <person name="Kunst F."/>
            <person name="Ogasawara N."/>
            <person name="Moszer I."/>
            <person name="Albertini A.M."/>
            <person name="Alloni G."/>
            <person name="Azevedo V."/>
            <person name="Bertero M.G."/>
            <person name="Bessieres P."/>
            <person name="Bolotin A."/>
            <person name="Borchert S."/>
            <person name="Borriss R."/>
            <person name="Boursier L."/>
            <person name="Brans A."/>
            <person name="Braun M."/>
            <person name="Brignell S.C."/>
            <person name="Bron S."/>
            <person name="Brouillet S."/>
            <person name="Bruschi C.V."/>
            <person name="Caldwell B."/>
            <person name="Capuano V."/>
            <person name="Carter N.M."/>
            <person name="Choi S.-K."/>
            <person name="Codani J.-J."/>
            <person name="Connerton I.F."/>
            <person name="Cummings N.J."/>
            <person name="Daniel R.A."/>
            <person name="Denizot F."/>
            <person name="Devine K.M."/>
            <person name="Duesterhoeft A."/>
            <person name="Ehrlich S.D."/>
            <person name="Emmerson P.T."/>
            <person name="Entian K.-D."/>
            <person name="Errington J."/>
            <person name="Fabret C."/>
            <person name="Ferrari E."/>
            <person name="Foulger D."/>
            <person name="Fritz C."/>
            <person name="Fujita M."/>
            <person name="Fujita Y."/>
            <person name="Fuma S."/>
            <person name="Galizzi A."/>
            <person name="Galleron N."/>
            <person name="Ghim S.-Y."/>
            <person name="Glaser P."/>
            <person name="Goffeau A."/>
            <person name="Golightly E.J."/>
            <person name="Grandi G."/>
            <person name="Guiseppi G."/>
            <person name="Guy B.J."/>
            <person name="Haga K."/>
            <person name="Haiech J."/>
            <person name="Harwood C.R."/>
            <person name="Henaut A."/>
            <person name="Hilbert H."/>
            <person name="Holsappel S."/>
            <person name="Hosono S."/>
            <person name="Hullo M.-F."/>
            <person name="Itaya M."/>
            <person name="Jones L.-M."/>
            <person name="Joris B."/>
            <person name="Karamata D."/>
            <person name="Kasahara Y."/>
            <person name="Klaerr-Blanchard M."/>
            <person name="Klein C."/>
            <person name="Kobayashi Y."/>
            <person name="Koetter P."/>
            <person name="Koningstein G."/>
            <person name="Krogh S."/>
            <person name="Kumano M."/>
            <person name="Kurita K."/>
            <person name="Lapidus A."/>
            <person name="Lardinois S."/>
            <person name="Lauber J."/>
            <person name="Lazarevic V."/>
            <person name="Lee S.-M."/>
            <person name="Levine A."/>
            <person name="Liu H."/>
            <person name="Masuda S."/>
            <person name="Mauel C."/>
            <person name="Medigue C."/>
            <person name="Medina N."/>
            <person name="Mellado R.P."/>
            <person name="Mizuno M."/>
            <person name="Moestl D."/>
            <person name="Nakai S."/>
            <person name="Noback M."/>
            <person name="Noone D."/>
            <person name="O'Reilly M."/>
            <person name="Ogawa K."/>
            <person name="Ogiwara A."/>
            <person name="Oudega B."/>
            <person name="Park S.-H."/>
            <person name="Parro V."/>
            <person name="Pohl T.M."/>
            <person name="Portetelle D."/>
            <person name="Porwollik S."/>
            <person name="Prescott A.M."/>
            <person name="Presecan E."/>
            <person name="Pujic P."/>
            <person name="Purnelle B."/>
            <person name="Rapoport G."/>
            <person name="Rey M."/>
            <person name="Reynolds S."/>
            <person name="Rieger M."/>
            <person name="Rivolta C."/>
            <person name="Rocha E."/>
            <person name="Roche B."/>
            <person name="Rose M."/>
            <person name="Sadaie Y."/>
            <person name="Sato T."/>
            <person name="Scanlan E."/>
            <person name="Schleich S."/>
            <person name="Schroeter R."/>
            <person name="Scoffone F."/>
            <person name="Sekiguchi J."/>
            <person name="Sekowska A."/>
            <person name="Seror S.J."/>
            <person name="Serror P."/>
            <person name="Shin B.-S."/>
            <person name="Soldo B."/>
            <person name="Sorokin A."/>
            <person name="Tacconi E."/>
            <person name="Takagi T."/>
            <person name="Takahashi H."/>
            <person name="Takemaru K."/>
            <person name="Takeuchi M."/>
            <person name="Tamakoshi A."/>
            <person name="Tanaka T."/>
            <person name="Terpstra P."/>
            <person name="Tognoni A."/>
            <person name="Tosato V."/>
            <person name="Uchiyama S."/>
            <person name="Vandenbol M."/>
            <person name="Vannier F."/>
            <person name="Vassarotti A."/>
            <person name="Viari A."/>
            <person name="Wambutt R."/>
            <person name="Wedler E."/>
            <person name="Wedler H."/>
            <person name="Weitzenegger T."/>
            <person name="Winters P."/>
            <person name="Wipat A."/>
            <person name="Yamamoto H."/>
            <person name="Yamane K."/>
            <person name="Yasumoto K."/>
            <person name="Yata K."/>
            <person name="Yoshida K."/>
            <person name="Yoshikawa H.-F."/>
            <person name="Zumstein E."/>
            <person name="Yoshikawa H."/>
            <person name="Danchin A."/>
        </authorList>
    </citation>
    <scope>NUCLEOTIDE SEQUENCE [LARGE SCALE GENOMIC DNA]</scope>
    <source>
        <strain>168</strain>
    </source>
</reference>